<keyword id="KW-0997">Cell inner membrane</keyword>
<keyword id="KW-1003">Cell membrane</keyword>
<keyword id="KW-0472">Membrane</keyword>
<keyword id="KW-1185">Reference proteome</keyword>
<keyword id="KW-0812">Transmembrane</keyword>
<keyword id="KW-1133">Transmembrane helix</keyword>
<keyword id="KW-0813">Transport</keyword>
<name>POTB_HAEIN</name>
<gene>
    <name type="primary">potB</name>
    <name type="ordered locus">HI_1346</name>
</gene>
<dbReference type="EMBL" id="L42023">
    <property type="protein sequence ID" value="AAC22990.1"/>
    <property type="molecule type" value="Genomic_DNA"/>
</dbReference>
<dbReference type="PIR" id="A64118">
    <property type="entry name" value="A64118"/>
</dbReference>
<dbReference type="RefSeq" id="NP_439497.1">
    <property type="nucleotide sequence ID" value="NC_000907.1"/>
</dbReference>
<dbReference type="SMR" id="P45170"/>
<dbReference type="STRING" id="71421.HI_1346"/>
<dbReference type="EnsemblBacteria" id="AAC22990">
    <property type="protein sequence ID" value="AAC22990"/>
    <property type="gene ID" value="HI_1346"/>
</dbReference>
<dbReference type="KEGG" id="hin:HI_1346"/>
<dbReference type="PATRIC" id="fig|71421.8.peg.1398"/>
<dbReference type="eggNOG" id="COG1176">
    <property type="taxonomic scope" value="Bacteria"/>
</dbReference>
<dbReference type="HOGENOM" id="CLU_016047_18_3_6"/>
<dbReference type="OrthoDB" id="9807047at2"/>
<dbReference type="PhylomeDB" id="P45170"/>
<dbReference type="BioCyc" id="HINF71421:G1GJ1-1371-MONOMER"/>
<dbReference type="Proteomes" id="UP000000579">
    <property type="component" value="Chromosome"/>
</dbReference>
<dbReference type="GO" id="GO:0005886">
    <property type="term" value="C:plasma membrane"/>
    <property type="evidence" value="ECO:0007669"/>
    <property type="project" value="UniProtKB-SubCell"/>
</dbReference>
<dbReference type="GO" id="GO:0055085">
    <property type="term" value="P:transmembrane transport"/>
    <property type="evidence" value="ECO:0007669"/>
    <property type="project" value="InterPro"/>
</dbReference>
<dbReference type="CDD" id="cd06261">
    <property type="entry name" value="TM_PBP2"/>
    <property type="match status" value="1"/>
</dbReference>
<dbReference type="Gene3D" id="1.10.3720.10">
    <property type="entry name" value="MetI-like"/>
    <property type="match status" value="1"/>
</dbReference>
<dbReference type="InterPro" id="IPR000515">
    <property type="entry name" value="MetI-like"/>
</dbReference>
<dbReference type="InterPro" id="IPR035906">
    <property type="entry name" value="MetI-like_sf"/>
</dbReference>
<dbReference type="NCBIfam" id="NF007044">
    <property type="entry name" value="PRK09497.1"/>
    <property type="match status" value="1"/>
</dbReference>
<dbReference type="PANTHER" id="PTHR42929:SF1">
    <property type="entry name" value="INNER MEMBRANE ABC TRANSPORTER PERMEASE PROTEIN YDCU-RELATED"/>
    <property type="match status" value="1"/>
</dbReference>
<dbReference type="PANTHER" id="PTHR42929">
    <property type="entry name" value="INNER MEMBRANE ABC TRANSPORTER PERMEASE PROTEIN YDCU-RELATED-RELATED"/>
    <property type="match status" value="1"/>
</dbReference>
<dbReference type="Pfam" id="PF00528">
    <property type="entry name" value="BPD_transp_1"/>
    <property type="match status" value="1"/>
</dbReference>
<dbReference type="SUPFAM" id="SSF161098">
    <property type="entry name" value="MetI-like"/>
    <property type="match status" value="1"/>
</dbReference>
<dbReference type="PROSITE" id="PS50928">
    <property type="entry name" value="ABC_TM1"/>
    <property type="match status" value="1"/>
</dbReference>
<proteinExistence type="inferred from homology"/>
<protein>
    <recommendedName>
        <fullName>Spermidine/putrescine transport system permease protein PotB</fullName>
    </recommendedName>
</protein>
<comment type="function">
    <text evidence="1">Required for the activity of the bacterial periplasmic transport system of putrescine and spermidine.</text>
</comment>
<comment type="subcellular location">
    <subcellularLocation>
        <location evidence="1">Cell inner membrane</location>
        <topology evidence="3">Multi-pass membrane protein</topology>
    </subcellularLocation>
</comment>
<comment type="similarity">
    <text evidence="4">Belongs to the binding-protein-dependent transport system permease family. CysTW subfamily.</text>
</comment>
<organism>
    <name type="scientific">Haemophilus influenzae (strain ATCC 51907 / DSM 11121 / KW20 / Rd)</name>
    <dbReference type="NCBI Taxonomy" id="71421"/>
    <lineage>
        <taxon>Bacteria</taxon>
        <taxon>Pseudomonadati</taxon>
        <taxon>Pseudomonadota</taxon>
        <taxon>Gammaproteobacteria</taxon>
        <taxon>Pasteurellales</taxon>
        <taxon>Pasteurellaceae</taxon>
        <taxon>Haemophilus</taxon>
    </lineage>
</organism>
<reference key="1">
    <citation type="journal article" date="1995" name="Science">
        <title>Whole-genome random sequencing and assembly of Haemophilus influenzae Rd.</title>
        <authorList>
            <person name="Fleischmann R.D."/>
            <person name="Adams M.D."/>
            <person name="White O."/>
            <person name="Clayton R.A."/>
            <person name="Kirkness E.F."/>
            <person name="Kerlavage A.R."/>
            <person name="Bult C.J."/>
            <person name="Tomb J.-F."/>
            <person name="Dougherty B.A."/>
            <person name="Merrick J.M."/>
            <person name="McKenney K."/>
            <person name="Sutton G.G."/>
            <person name="FitzHugh W."/>
            <person name="Fields C.A."/>
            <person name="Gocayne J.D."/>
            <person name="Scott J.D."/>
            <person name="Shirley R."/>
            <person name="Liu L.-I."/>
            <person name="Glodek A."/>
            <person name="Kelley J.M."/>
            <person name="Weidman J.F."/>
            <person name="Phillips C.A."/>
            <person name="Spriggs T."/>
            <person name="Hedblom E."/>
            <person name="Cotton M.D."/>
            <person name="Utterback T.R."/>
            <person name="Hanna M.C."/>
            <person name="Nguyen D.T."/>
            <person name="Saudek D.M."/>
            <person name="Brandon R.C."/>
            <person name="Fine L.D."/>
            <person name="Fritchman J.L."/>
            <person name="Fuhrmann J.L."/>
            <person name="Geoghagen N.S.M."/>
            <person name="Gnehm C.L."/>
            <person name="McDonald L.A."/>
            <person name="Small K.V."/>
            <person name="Fraser C.M."/>
            <person name="Smith H.O."/>
            <person name="Venter J.C."/>
        </authorList>
    </citation>
    <scope>NUCLEOTIDE SEQUENCE [LARGE SCALE GENOMIC DNA]</scope>
    <source>
        <strain>ATCC 51907 / DSM 11121 / KW20 / Rd</strain>
    </source>
</reference>
<sequence length="286" mass="32210">MKIINNKFQKITVAIIFSWLIFFVLIPNLLVLAVSFLTRDGSNFYAFPITIENYTNLFNPLYAQVVWNSLSMSGIATIICLLIGYPFAFMMSKIHPKYRPLLLFLVVLPFWTNSLIRIYGMKVFLGVKGILNTMLIDMGILSAPIRILNTEIAVIIGLVYLLLPFMILPLYSAIEKLDNRLLEAARDLGANTFQRFFRVILPLTMPGIIAGCLLVLLPAMGMFYVADLLGGAKVLLVGNVIKSEFLISRNWPFGSAVSIGLTVLMALLIFVYYRANKLLNRKVELE</sequence>
<evidence type="ECO:0000250" key="1"/>
<evidence type="ECO:0000255" key="2"/>
<evidence type="ECO:0000255" key="3">
    <source>
        <dbReference type="PROSITE-ProRule" id="PRU00441"/>
    </source>
</evidence>
<evidence type="ECO:0000305" key="4"/>
<accession>P45170</accession>
<feature type="chain" id="PRO_0000060178" description="Spermidine/putrescine transport system permease protein PotB">
    <location>
        <begin position="1"/>
        <end position="286"/>
    </location>
</feature>
<feature type="topological domain" description="Cytoplasmic" evidence="2">
    <location>
        <begin position="1"/>
        <end position="13"/>
    </location>
</feature>
<feature type="transmembrane region" description="Helical" evidence="3">
    <location>
        <begin position="14"/>
        <end position="33"/>
    </location>
</feature>
<feature type="topological domain" description="Periplasmic" evidence="2">
    <location>
        <begin position="34"/>
        <end position="71"/>
    </location>
</feature>
<feature type="transmembrane region" description="Helical" evidence="3">
    <location>
        <begin position="72"/>
        <end position="91"/>
    </location>
</feature>
<feature type="topological domain" description="Cytoplasmic" evidence="2">
    <location>
        <begin position="92"/>
        <end position="100"/>
    </location>
</feature>
<feature type="transmembrane region" description="Helical" evidence="3">
    <location>
        <begin position="101"/>
        <end position="120"/>
    </location>
</feature>
<feature type="topological domain" description="Periplasmic" evidence="2">
    <location>
        <begin position="121"/>
        <end position="151"/>
    </location>
</feature>
<feature type="transmembrane region" description="Helical" evidence="3">
    <location>
        <begin position="152"/>
        <end position="171"/>
    </location>
</feature>
<feature type="topological domain" description="Cytoplasmic" evidence="2">
    <location>
        <begin position="172"/>
        <end position="199"/>
    </location>
</feature>
<feature type="transmembrane region" description="Helical" evidence="3">
    <location>
        <begin position="200"/>
        <end position="219"/>
    </location>
</feature>
<feature type="topological domain" description="Periplasmic" evidence="2">
    <location>
        <begin position="220"/>
        <end position="252"/>
    </location>
</feature>
<feature type="transmembrane region" description="Helical" evidence="3">
    <location>
        <begin position="253"/>
        <end position="272"/>
    </location>
</feature>
<feature type="topological domain" description="Cytoplasmic" evidence="2">
    <location>
        <begin position="273"/>
        <end position="286"/>
    </location>
</feature>
<feature type="domain" description="ABC transmembrane type-1" evidence="3">
    <location>
        <begin position="66"/>
        <end position="274"/>
    </location>
</feature>